<sequence length="156" mass="17359">MNMNATLLGQAIAFFFFVTFCMKYVWPPLMEAIEERQAKIADGLVAADRAAKDLNLAQANASEQLKEAKHAASELIEQANKRRAQIVDEAKAEAQAEREKILAQGLAEIESERNRARDELRKQVATLAVIGAEKILERSIDKDVHAELLNKVTAEL</sequence>
<accession>Q6LLG4</accession>
<protein>
    <recommendedName>
        <fullName evidence="1">ATP synthase subunit b</fullName>
    </recommendedName>
    <alternativeName>
        <fullName evidence="1">ATP synthase F(0) sector subunit b</fullName>
    </alternativeName>
    <alternativeName>
        <fullName evidence="1">ATPase subunit I</fullName>
    </alternativeName>
    <alternativeName>
        <fullName evidence="1">F-type ATPase subunit b</fullName>
        <shortName evidence="1">F-ATPase subunit b</shortName>
    </alternativeName>
</protein>
<gene>
    <name evidence="1" type="primary">atpF</name>
    <name type="ordered locus">PBPRA3608</name>
</gene>
<feature type="chain" id="PRO_0000368656" description="ATP synthase subunit b">
    <location>
        <begin position="1"/>
        <end position="156"/>
    </location>
</feature>
<feature type="transmembrane region" description="Helical" evidence="1">
    <location>
        <begin position="7"/>
        <end position="29"/>
    </location>
</feature>
<dbReference type="EMBL" id="CR378674">
    <property type="protein sequence ID" value="CAG21864.1"/>
    <property type="molecule type" value="Genomic_DNA"/>
</dbReference>
<dbReference type="RefSeq" id="WP_011220100.1">
    <property type="nucleotide sequence ID" value="NC_006370.1"/>
</dbReference>
<dbReference type="SMR" id="Q6LLG4"/>
<dbReference type="STRING" id="298386.PBPRA3608"/>
<dbReference type="KEGG" id="ppr:PBPRA3608"/>
<dbReference type="eggNOG" id="COG0711">
    <property type="taxonomic scope" value="Bacteria"/>
</dbReference>
<dbReference type="HOGENOM" id="CLU_079215_4_5_6"/>
<dbReference type="Proteomes" id="UP000000593">
    <property type="component" value="Chromosome 1"/>
</dbReference>
<dbReference type="GO" id="GO:0005886">
    <property type="term" value="C:plasma membrane"/>
    <property type="evidence" value="ECO:0007669"/>
    <property type="project" value="UniProtKB-SubCell"/>
</dbReference>
<dbReference type="GO" id="GO:0045259">
    <property type="term" value="C:proton-transporting ATP synthase complex"/>
    <property type="evidence" value="ECO:0007669"/>
    <property type="project" value="UniProtKB-KW"/>
</dbReference>
<dbReference type="GO" id="GO:0046933">
    <property type="term" value="F:proton-transporting ATP synthase activity, rotational mechanism"/>
    <property type="evidence" value="ECO:0007669"/>
    <property type="project" value="UniProtKB-UniRule"/>
</dbReference>
<dbReference type="GO" id="GO:0046961">
    <property type="term" value="F:proton-transporting ATPase activity, rotational mechanism"/>
    <property type="evidence" value="ECO:0007669"/>
    <property type="project" value="TreeGrafter"/>
</dbReference>
<dbReference type="CDD" id="cd06503">
    <property type="entry name" value="ATP-synt_Fo_b"/>
    <property type="match status" value="1"/>
</dbReference>
<dbReference type="FunFam" id="1.20.5.620:FF:000001">
    <property type="entry name" value="ATP synthase subunit b"/>
    <property type="match status" value="1"/>
</dbReference>
<dbReference type="Gene3D" id="1.20.5.620">
    <property type="entry name" value="F1F0 ATP synthase subunit B, membrane domain"/>
    <property type="match status" value="1"/>
</dbReference>
<dbReference type="HAMAP" id="MF_01398">
    <property type="entry name" value="ATP_synth_b_bprime"/>
    <property type="match status" value="1"/>
</dbReference>
<dbReference type="InterPro" id="IPR028987">
    <property type="entry name" value="ATP_synth_B-like_membr_sf"/>
</dbReference>
<dbReference type="InterPro" id="IPR002146">
    <property type="entry name" value="ATP_synth_b/b'su_bac/chlpt"/>
</dbReference>
<dbReference type="InterPro" id="IPR005864">
    <property type="entry name" value="ATP_synth_F0_bsu_bac"/>
</dbReference>
<dbReference type="InterPro" id="IPR050059">
    <property type="entry name" value="ATP_synthase_B_chain"/>
</dbReference>
<dbReference type="NCBIfam" id="TIGR01144">
    <property type="entry name" value="ATP_synt_b"/>
    <property type="match status" value="1"/>
</dbReference>
<dbReference type="NCBIfam" id="NF004411">
    <property type="entry name" value="PRK05759.1-2"/>
    <property type="match status" value="1"/>
</dbReference>
<dbReference type="NCBIfam" id="NF004413">
    <property type="entry name" value="PRK05759.1-4"/>
    <property type="match status" value="1"/>
</dbReference>
<dbReference type="PANTHER" id="PTHR33445:SF1">
    <property type="entry name" value="ATP SYNTHASE SUBUNIT B"/>
    <property type="match status" value="1"/>
</dbReference>
<dbReference type="PANTHER" id="PTHR33445">
    <property type="entry name" value="ATP SYNTHASE SUBUNIT B', CHLOROPLASTIC"/>
    <property type="match status" value="1"/>
</dbReference>
<dbReference type="Pfam" id="PF00430">
    <property type="entry name" value="ATP-synt_B"/>
    <property type="match status" value="1"/>
</dbReference>
<dbReference type="SUPFAM" id="SSF81573">
    <property type="entry name" value="F1F0 ATP synthase subunit B, membrane domain"/>
    <property type="match status" value="1"/>
</dbReference>
<proteinExistence type="inferred from homology"/>
<keyword id="KW-0066">ATP synthesis</keyword>
<keyword id="KW-0997">Cell inner membrane</keyword>
<keyword id="KW-1003">Cell membrane</keyword>
<keyword id="KW-0138">CF(0)</keyword>
<keyword id="KW-0375">Hydrogen ion transport</keyword>
<keyword id="KW-0406">Ion transport</keyword>
<keyword id="KW-0472">Membrane</keyword>
<keyword id="KW-1185">Reference proteome</keyword>
<keyword id="KW-0812">Transmembrane</keyword>
<keyword id="KW-1133">Transmembrane helix</keyword>
<keyword id="KW-0813">Transport</keyword>
<reference key="1">
    <citation type="journal article" date="2005" name="Science">
        <title>Life at depth: Photobacterium profundum genome sequence and expression analysis.</title>
        <authorList>
            <person name="Vezzi A."/>
            <person name="Campanaro S."/>
            <person name="D'Angelo M."/>
            <person name="Simonato F."/>
            <person name="Vitulo N."/>
            <person name="Lauro F.M."/>
            <person name="Cestaro A."/>
            <person name="Malacrida G."/>
            <person name="Simionati B."/>
            <person name="Cannata N."/>
            <person name="Romualdi C."/>
            <person name="Bartlett D.H."/>
            <person name="Valle G."/>
        </authorList>
    </citation>
    <scope>NUCLEOTIDE SEQUENCE [LARGE SCALE GENOMIC DNA]</scope>
    <source>
        <strain>ATCC BAA-1253 / SS9</strain>
    </source>
</reference>
<organism>
    <name type="scientific">Photobacterium profundum (strain SS9)</name>
    <dbReference type="NCBI Taxonomy" id="298386"/>
    <lineage>
        <taxon>Bacteria</taxon>
        <taxon>Pseudomonadati</taxon>
        <taxon>Pseudomonadota</taxon>
        <taxon>Gammaproteobacteria</taxon>
        <taxon>Vibrionales</taxon>
        <taxon>Vibrionaceae</taxon>
        <taxon>Photobacterium</taxon>
    </lineage>
</organism>
<comment type="function">
    <text evidence="1">F(1)F(0) ATP synthase produces ATP from ADP in the presence of a proton or sodium gradient. F-type ATPases consist of two structural domains, F(1) containing the extramembraneous catalytic core and F(0) containing the membrane proton channel, linked together by a central stalk and a peripheral stalk. During catalysis, ATP synthesis in the catalytic domain of F(1) is coupled via a rotary mechanism of the central stalk subunits to proton translocation.</text>
</comment>
<comment type="function">
    <text evidence="1">Component of the F(0) channel, it forms part of the peripheral stalk, linking F(1) to F(0).</text>
</comment>
<comment type="subunit">
    <text evidence="1">F-type ATPases have 2 components, F(1) - the catalytic core - and F(0) - the membrane proton channel. F(1) has five subunits: alpha(3), beta(3), gamma(1), delta(1), epsilon(1). F(0) has three main subunits: a(1), b(2) and c(10-14). The alpha and beta chains form an alternating ring which encloses part of the gamma chain. F(1) is attached to F(0) by a central stalk formed by the gamma and epsilon chains, while a peripheral stalk is formed by the delta and b chains.</text>
</comment>
<comment type="subcellular location">
    <subcellularLocation>
        <location evidence="1">Cell inner membrane</location>
        <topology evidence="1">Single-pass membrane protein</topology>
    </subcellularLocation>
</comment>
<comment type="similarity">
    <text evidence="1">Belongs to the ATPase B chain family.</text>
</comment>
<evidence type="ECO:0000255" key="1">
    <source>
        <dbReference type="HAMAP-Rule" id="MF_01398"/>
    </source>
</evidence>
<name>ATPF_PHOPR</name>